<feature type="chain" id="PRO_1000126667" description="Large ribosomal subunit protein bL31">
    <location>
        <begin position="1"/>
        <end position="81"/>
    </location>
</feature>
<feature type="binding site" evidence="1">
    <location>
        <position position="16"/>
    </location>
    <ligand>
        <name>Zn(2+)</name>
        <dbReference type="ChEBI" id="CHEBI:29105"/>
    </ligand>
</feature>
<feature type="binding site" evidence="1">
    <location>
        <position position="18"/>
    </location>
    <ligand>
        <name>Zn(2+)</name>
        <dbReference type="ChEBI" id="CHEBI:29105"/>
    </ligand>
</feature>
<feature type="binding site" evidence="1">
    <location>
        <position position="38"/>
    </location>
    <ligand>
        <name>Zn(2+)</name>
        <dbReference type="ChEBI" id="CHEBI:29105"/>
    </ligand>
</feature>
<feature type="binding site" evidence="1">
    <location>
        <position position="41"/>
    </location>
    <ligand>
        <name>Zn(2+)</name>
        <dbReference type="ChEBI" id="CHEBI:29105"/>
    </ligand>
</feature>
<accession>A3Q3C3</accession>
<organism>
    <name type="scientific">Mycobacterium sp. (strain JLS)</name>
    <dbReference type="NCBI Taxonomy" id="164757"/>
    <lineage>
        <taxon>Bacteria</taxon>
        <taxon>Bacillati</taxon>
        <taxon>Actinomycetota</taxon>
        <taxon>Actinomycetes</taxon>
        <taxon>Mycobacteriales</taxon>
        <taxon>Mycobacteriaceae</taxon>
        <taxon>Mycobacterium</taxon>
    </lineage>
</organism>
<comment type="function">
    <text evidence="1">Binds the 23S rRNA.</text>
</comment>
<comment type="cofactor">
    <cofactor evidence="1">
        <name>Zn(2+)</name>
        <dbReference type="ChEBI" id="CHEBI:29105"/>
    </cofactor>
    <text evidence="1">Binds 1 zinc ion per subunit.</text>
</comment>
<comment type="subunit">
    <text evidence="1">Part of the 50S ribosomal subunit.</text>
</comment>
<comment type="similarity">
    <text evidence="1">Belongs to the bacterial ribosomal protein bL31 family. Type A subfamily.</text>
</comment>
<name>RL31_MYCSJ</name>
<sequence>MKTGIHPDYVETTVQCGCGNTFTTRSTKKTGNIVVEVCSQCHPFYTGKQKILDSGGRVARFEKRYGKRGANKAANTDSADK</sequence>
<reference key="1">
    <citation type="submission" date="2007-02" db="EMBL/GenBank/DDBJ databases">
        <title>Complete sequence of Mycobacterium sp. JLS.</title>
        <authorList>
            <consortium name="US DOE Joint Genome Institute"/>
            <person name="Copeland A."/>
            <person name="Lucas S."/>
            <person name="Lapidus A."/>
            <person name="Barry K."/>
            <person name="Detter J.C."/>
            <person name="Glavina del Rio T."/>
            <person name="Hammon N."/>
            <person name="Israni S."/>
            <person name="Dalin E."/>
            <person name="Tice H."/>
            <person name="Pitluck S."/>
            <person name="Chain P."/>
            <person name="Malfatti S."/>
            <person name="Shin M."/>
            <person name="Vergez L."/>
            <person name="Schmutz J."/>
            <person name="Larimer F."/>
            <person name="Land M."/>
            <person name="Hauser L."/>
            <person name="Kyrpides N."/>
            <person name="Mikhailova N."/>
            <person name="Miller C.D."/>
            <person name="Anderson A.J."/>
            <person name="Sims R.C."/>
            <person name="Richardson P."/>
        </authorList>
    </citation>
    <scope>NUCLEOTIDE SEQUENCE [LARGE SCALE GENOMIC DNA]</scope>
    <source>
        <strain>JLS</strain>
    </source>
</reference>
<keyword id="KW-0479">Metal-binding</keyword>
<keyword id="KW-0687">Ribonucleoprotein</keyword>
<keyword id="KW-0689">Ribosomal protein</keyword>
<keyword id="KW-0694">RNA-binding</keyword>
<keyword id="KW-0699">rRNA-binding</keyword>
<keyword id="KW-0862">Zinc</keyword>
<protein>
    <recommendedName>
        <fullName evidence="1">Large ribosomal subunit protein bL31</fullName>
    </recommendedName>
    <alternativeName>
        <fullName evidence="2">50S ribosomal protein L31</fullName>
    </alternativeName>
</protein>
<dbReference type="EMBL" id="CP000580">
    <property type="protein sequence ID" value="ABN99650.1"/>
    <property type="molecule type" value="Genomic_DNA"/>
</dbReference>
<dbReference type="SMR" id="A3Q3C3"/>
<dbReference type="KEGG" id="mjl:Mjls_3874"/>
<dbReference type="HOGENOM" id="CLU_114306_4_3_11"/>
<dbReference type="BioCyc" id="MSP164757:G1G8C-3914-MONOMER"/>
<dbReference type="GO" id="GO:1990904">
    <property type="term" value="C:ribonucleoprotein complex"/>
    <property type="evidence" value="ECO:0007669"/>
    <property type="project" value="UniProtKB-KW"/>
</dbReference>
<dbReference type="GO" id="GO:0005840">
    <property type="term" value="C:ribosome"/>
    <property type="evidence" value="ECO:0007669"/>
    <property type="project" value="UniProtKB-KW"/>
</dbReference>
<dbReference type="GO" id="GO:0046872">
    <property type="term" value="F:metal ion binding"/>
    <property type="evidence" value="ECO:0007669"/>
    <property type="project" value="UniProtKB-KW"/>
</dbReference>
<dbReference type="GO" id="GO:0019843">
    <property type="term" value="F:rRNA binding"/>
    <property type="evidence" value="ECO:0007669"/>
    <property type="project" value="UniProtKB-KW"/>
</dbReference>
<dbReference type="GO" id="GO:0003735">
    <property type="term" value="F:structural constituent of ribosome"/>
    <property type="evidence" value="ECO:0007669"/>
    <property type="project" value="InterPro"/>
</dbReference>
<dbReference type="GO" id="GO:0006412">
    <property type="term" value="P:translation"/>
    <property type="evidence" value="ECO:0007669"/>
    <property type="project" value="UniProtKB-UniRule"/>
</dbReference>
<dbReference type="Gene3D" id="4.10.830.30">
    <property type="entry name" value="Ribosomal protein L31"/>
    <property type="match status" value="1"/>
</dbReference>
<dbReference type="HAMAP" id="MF_00501">
    <property type="entry name" value="Ribosomal_bL31_1"/>
    <property type="match status" value="1"/>
</dbReference>
<dbReference type="InterPro" id="IPR034704">
    <property type="entry name" value="Ribosomal_bL28/bL31-like_sf"/>
</dbReference>
<dbReference type="InterPro" id="IPR002150">
    <property type="entry name" value="Ribosomal_bL31"/>
</dbReference>
<dbReference type="InterPro" id="IPR027491">
    <property type="entry name" value="Ribosomal_bL31_A"/>
</dbReference>
<dbReference type="InterPro" id="IPR042105">
    <property type="entry name" value="Ribosomal_bL31_sf"/>
</dbReference>
<dbReference type="NCBIfam" id="TIGR00105">
    <property type="entry name" value="L31"/>
    <property type="match status" value="1"/>
</dbReference>
<dbReference type="NCBIfam" id="NF000612">
    <property type="entry name" value="PRK00019.1"/>
    <property type="match status" value="1"/>
</dbReference>
<dbReference type="NCBIfam" id="NF001809">
    <property type="entry name" value="PRK00528.1"/>
    <property type="match status" value="1"/>
</dbReference>
<dbReference type="PANTHER" id="PTHR33280">
    <property type="entry name" value="50S RIBOSOMAL PROTEIN L31, CHLOROPLASTIC"/>
    <property type="match status" value="1"/>
</dbReference>
<dbReference type="PANTHER" id="PTHR33280:SF1">
    <property type="entry name" value="LARGE RIBOSOMAL SUBUNIT PROTEIN BL31C"/>
    <property type="match status" value="1"/>
</dbReference>
<dbReference type="Pfam" id="PF01197">
    <property type="entry name" value="Ribosomal_L31"/>
    <property type="match status" value="1"/>
</dbReference>
<dbReference type="PRINTS" id="PR01249">
    <property type="entry name" value="RIBOSOMALL31"/>
</dbReference>
<dbReference type="SUPFAM" id="SSF143800">
    <property type="entry name" value="L28p-like"/>
    <property type="match status" value="1"/>
</dbReference>
<dbReference type="PROSITE" id="PS01143">
    <property type="entry name" value="RIBOSOMAL_L31"/>
    <property type="match status" value="1"/>
</dbReference>
<gene>
    <name evidence="1" type="primary">rpmE</name>
    <name type="ordered locus">Mjls_3874</name>
</gene>
<evidence type="ECO:0000255" key="1">
    <source>
        <dbReference type="HAMAP-Rule" id="MF_00501"/>
    </source>
</evidence>
<evidence type="ECO:0000305" key="2"/>
<proteinExistence type="inferred from homology"/>